<dbReference type="EC" id="4.1.1.37" evidence="1"/>
<dbReference type="EMBL" id="CP000471">
    <property type="protein sequence ID" value="ABK42554.1"/>
    <property type="molecule type" value="Genomic_DNA"/>
</dbReference>
<dbReference type="RefSeq" id="WP_011711728.1">
    <property type="nucleotide sequence ID" value="NC_008576.1"/>
</dbReference>
<dbReference type="SMR" id="A0L3L1"/>
<dbReference type="STRING" id="156889.Mmc1_0025"/>
<dbReference type="KEGG" id="mgm:Mmc1_0025"/>
<dbReference type="eggNOG" id="COG0407">
    <property type="taxonomic scope" value="Bacteria"/>
</dbReference>
<dbReference type="HOGENOM" id="CLU_040933_0_0_5"/>
<dbReference type="OrthoDB" id="9806656at2"/>
<dbReference type="UniPathway" id="UPA00251">
    <property type="reaction ID" value="UER00321"/>
</dbReference>
<dbReference type="Proteomes" id="UP000002586">
    <property type="component" value="Chromosome"/>
</dbReference>
<dbReference type="GO" id="GO:0005829">
    <property type="term" value="C:cytosol"/>
    <property type="evidence" value="ECO:0007669"/>
    <property type="project" value="TreeGrafter"/>
</dbReference>
<dbReference type="GO" id="GO:0004853">
    <property type="term" value="F:uroporphyrinogen decarboxylase activity"/>
    <property type="evidence" value="ECO:0007669"/>
    <property type="project" value="UniProtKB-UniRule"/>
</dbReference>
<dbReference type="GO" id="GO:0019353">
    <property type="term" value="P:protoporphyrinogen IX biosynthetic process from glutamate"/>
    <property type="evidence" value="ECO:0007669"/>
    <property type="project" value="TreeGrafter"/>
</dbReference>
<dbReference type="CDD" id="cd00717">
    <property type="entry name" value="URO-D"/>
    <property type="match status" value="1"/>
</dbReference>
<dbReference type="FunFam" id="3.20.20.210:FF:000001">
    <property type="entry name" value="Uroporphyrinogen decarboxylase"/>
    <property type="match status" value="1"/>
</dbReference>
<dbReference type="Gene3D" id="3.20.20.210">
    <property type="match status" value="1"/>
</dbReference>
<dbReference type="HAMAP" id="MF_00218">
    <property type="entry name" value="URO_D"/>
    <property type="match status" value="1"/>
</dbReference>
<dbReference type="InterPro" id="IPR038071">
    <property type="entry name" value="UROD/MetE-like_sf"/>
</dbReference>
<dbReference type="InterPro" id="IPR006361">
    <property type="entry name" value="Uroporphyrinogen_deCO2ase_HemE"/>
</dbReference>
<dbReference type="InterPro" id="IPR000257">
    <property type="entry name" value="Uroporphyrinogen_deCOase"/>
</dbReference>
<dbReference type="NCBIfam" id="TIGR01464">
    <property type="entry name" value="hemE"/>
    <property type="match status" value="1"/>
</dbReference>
<dbReference type="PANTHER" id="PTHR21091">
    <property type="entry name" value="METHYLTETRAHYDROFOLATE:HOMOCYSTEINE METHYLTRANSFERASE RELATED"/>
    <property type="match status" value="1"/>
</dbReference>
<dbReference type="PANTHER" id="PTHR21091:SF169">
    <property type="entry name" value="UROPORPHYRINOGEN DECARBOXYLASE"/>
    <property type="match status" value="1"/>
</dbReference>
<dbReference type="Pfam" id="PF01208">
    <property type="entry name" value="URO-D"/>
    <property type="match status" value="1"/>
</dbReference>
<dbReference type="SUPFAM" id="SSF51726">
    <property type="entry name" value="UROD/MetE-like"/>
    <property type="match status" value="1"/>
</dbReference>
<dbReference type="PROSITE" id="PS00906">
    <property type="entry name" value="UROD_1"/>
    <property type="match status" value="1"/>
</dbReference>
<dbReference type="PROSITE" id="PS00907">
    <property type="entry name" value="UROD_2"/>
    <property type="match status" value="1"/>
</dbReference>
<proteinExistence type="inferred from homology"/>
<evidence type="ECO:0000255" key="1">
    <source>
        <dbReference type="HAMAP-Rule" id="MF_00218"/>
    </source>
</evidence>
<sequence>MKSKHRFIQACFRQPVDRTPIWLMRQAGRYLPEYRKTRAQAGDFMALCKNTELATEVTMQPIRRYGLDAAILFSDILVIPEAMGMDVRFATGEGPLLDPPVRVHGDIEKLIHTDPEDSLDYVMRAVASIRKALNEEIPLIGFSGSPWTLATYMVEGGSSKTFGLVKGMLYDAPESMHLLLDKLADMVAAYLNAQIRHGAQAVQIFDTWGGVLSQPTFREFSLRSMKAVVDRLDRTNSAGERIPVILFAKGCNAMVEDIAQSGCDVVGLDWTSEIGPLRERIGHKVALQGNMDPALLYASPERIAQGAREVLQAFGPHPGHIFNLGHGMAPDMSPDHVEALVRAVKEEGLKIHQGVA</sequence>
<comment type="function">
    <text evidence="1">Catalyzes the decarboxylation of four acetate groups of uroporphyrinogen-III to yield coproporphyrinogen-III.</text>
</comment>
<comment type="catalytic activity">
    <reaction evidence="1">
        <text>uroporphyrinogen III + 4 H(+) = coproporphyrinogen III + 4 CO2</text>
        <dbReference type="Rhea" id="RHEA:19865"/>
        <dbReference type="ChEBI" id="CHEBI:15378"/>
        <dbReference type="ChEBI" id="CHEBI:16526"/>
        <dbReference type="ChEBI" id="CHEBI:57308"/>
        <dbReference type="ChEBI" id="CHEBI:57309"/>
        <dbReference type="EC" id="4.1.1.37"/>
    </reaction>
</comment>
<comment type="pathway">
    <text evidence="1">Porphyrin-containing compound metabolism; protoporphyrin-IX biosynthesis; coproporphyrinogen-III from 5-aminolevulinate: step 4/4.</text>
</comment>
<comment type="subunit">
    <text evidence="1">Homodimer.</text>
</comment>
<comment type="subcellular location">
    <subcellularLocation>
        <location evidence="1">Cytoplasm</location>
    </subcellularLocation>
</comment>
<comment type="similarity">
    <text evidence="1">Belongs to the uroporphyrinogen decarboxylase family.</text>
</comment>
<protein>
    <recommendedName>
        <fullName evidence="1">Uroporphyrinogen decarboxylase</fullName>
        <shortName evidence="1">UPD</shortName>
        <shortName evidence="1">URO-D</shortName>
        <ecNumber evidence="1">4.1.1.37</ecNumber>
    </recommendedName>
</protein>
<organism>
    <name type="scientific">Magnetococcus marinus (strain ATCC BAA-1437 / JCM 17883 / MC-1)</name>
    <dbReference type="NCBI Taxonomy" id="156889"/>
    <lineage>
        <taxon>Bacteria</taxon>
        <taxon>Pseudomonadati</taxon>
        <taxon>Pseudomonadota</taxon>
        <taxon>Alphaproteobacteria</taxon>
        <taxon>Magnetococcales</taxon>
        <taxon>Magnetococcaceae</taxon>
        <taxon>Magnetococcus</taxon>
    </lineage>
</organism>
<feature type="chain" id="PRO_1000023915" description="Uroporphyrinogen decarboxylase">
    <location>
        <begin position="1"/>
        <end position="356"/>
    </location>
</feature>
<feature type="binding site" evidence="1">
    <location>
        <begin position="25"/>
        <end position="29"/>
    </location>
    <ligand>
        <name>substrate</name>
    </ligand>
</feature>
<feature type="binding site" evidence="1">
    <location>
        <position position="75"/>
    </location>
    <ligand>
        <name>substrate</name>
    </ligand>
</feature>
<feature type="binding site" evidence="1">
    <location>
        <position position="152"/>
    </location>
    <ligand>
        <name>substrate</name>
    </ligand>
</feature>
<feature type="binding site" evidence="1">
    <location>
        <position position="207"/>
    </location>
    <ligand>
        <name>substrate</name>
    </ligand>
</feature>
<feature type="binding site" evidence="1">
    <location>
        <position position="326"/>
    </location>
    <ligand>
        <name>substrate</name>
    </ligand>
</feature>
<feature type="site" description="Transition state stabilizer" evidence="1">
    <location>
        <position position="75"/>
    </location>
</feature>
<gene>
    <name evidence="1" type="primary">hemE</name>
    <name type="ordered locus">Mmc1_0025</name>
</gene>
<keyword id="KW-0963">Cytoplasm</keyword>
<keyword id="KW-0210">Decarboxylase</keyword>
<keyword id="KW-0456">Lyase</keyword>
<keyword id="KW-0627">Porphyrin biosynthesis</keyword>
<keyword id="KW-1185">Reference proteome</keyword>
<reference key="1">
    <citation type="journal article" date="2009" name="Appl. Environ. Microbiol.">
        <title>Complete genome sequence of the chemolithoautotrophic marine magnetotactic coccus strain MC-1.</title>
        <authorList>
            <person name="Schubbe S."/>
            <person name="Williams T.J."/>
            <person name="Xie G."/>
            <person name="Kiss H.E."/>
            <person name="Brettin T.S."/>
            <person name="Martinez D."/>
            <person name="Ross C.A."/>
            <person name="Schuler D."/>
            <person name="Cox B.L."/>
            <person name="Nealson K.H."/>
            <person name="Bazylinski D.A."/>
        </authorList>
    </citation>
    <scope>NUCLEOTIDE SEQUENCE [LARGE SCALE GENOMIC DNA]</scope>
    <source>
        <strain>ATCC BAA-1437 / JCM 17883 / MC-1</strain>
    </source>
</reference>
<name>DCUP_MAGMM</name>
<accession>A0L3L1</accession>